<reference key="1">
    <citation type="submission" date="2008-12" db="EMBL/GenBank/DDBJ databases">
        <title>Complete sequence of Chloroflexus aggregans DSM 9485.</title>
        <authorList>
            <consortium name="US DOE Joint Genome Institute"/>
            <person name="Lucas S."/>
            <person name="Copeland A."/>
            <person name="Lapidus A."/>
            <person name="Glavina del Rio T."/>
            <person name="Dalin E."/>
            <person name="Tice H."/>
            <person name="Pitluck S."/>
            <person name="Foster B."/>
            <person name="Larimer F."/>
            <person name="Land M."/>
            <person name="Hauser L."/>
            <person name="Kyrpides N."/>
            <person name="Mikhailova N."/>
            <person name="Bryant D.A."/>
            <person name="Richardson P."/>
        </authorList>
    </citation>
    <scope>NUCLEOTIDE SEQUENCE [LARGE SCALE GENOMIC DNA]</scope>
    <source>
        <strain>MD-66 / DSM 9485</strain>
    </source>
</reference>
<sequence length="174" mass="20042">MRCPICHFPETDVIDTRKLYEGEVIRRRRKCRACGRRFTTYERIESVSLMVVKKDGTREPYDREKIARGVRTACYRRPVSADAIEQLVNEVETAVMATDQQEISSQFIGDAVMRRLRDLDEVAYIRFASVYRSFADIGKLREAVDELLEREGTRNGHSSAATTDQGTTDNHSRM</sequence>
<feature type="chain" id="PRO_1000191785" description="Transcriptional repressor NrdR">
    <location>
        <begin position="1"/>
        <end position="174"/>
    </location>
</feature>
<feature type="domain" description="ATP-cone" evidence="1">
    <location>
        <begin position="49"/>
        <end position="139"/>
    </location>
</feature>
<feature type="zinc finger region" evidence="1">
    <location>
        <begin position="3"/>
        <end position="34"/>
    </location>
</feature>
<feature type="region of interest" description="Disordered" evidence="2">
    <location>
        <begin position="151"/>
        <end position="174"/>
    </location>
</feature>
<feature type="compositionally biased region" description="Polar residues" evidence="2">
    <location>
        <begin position="155"/>
        <end position="174"/>
    </location>
</feature>
<name>NRDR_CHLAD</name>
<accession>B8G2S3</accession>
<proteinExistence type="inferred from homology"/>
<dbReference type="EMBL" id="CP001337">
    <property type="protein sequence ID" value="ACL23227.1"/>
    <property type="molecule type" value="Genomic_DNA"/>
</dbReference>
<dbReference type="RefSeq" id="WP_012615593.1">
    <property type="nucleotide sequence ID" value="NC_011831.1"/>
</dbReference>
<dbReference type="SMR" id="B8G2S3"/>
<dbReference type="STRING" id="326427.Cagg_0279"/>
<dbReference type="KEGG" id="cag:Cagg_0279"/>
<dbReference type="eggNOG" id="COG1327">
    <property type="taxonomic scope" value="Bacteria"/>
</dbReference>
<dbReference type="HOGENOM" id="CLU_108412_0_0_0"/>
<dbReference type="OrthoDB" id="9807461at2"/>
<dbReference type="Proteomes" id="UP000002508">
    <property type="component" value="Chromosome"/>
</dbReference>
<dbReference type="GO" id="GO:0005524">
    <property type="term" value="F:ATP binding"/>
    <property type="evidence" value="ECO:0007669"/>
    <property type="project" value="UniProtKB-KW"/>
</dbReference>
<dbReference type="GO" id="GO:0003677">
    <property type="term" value="F:DNA binding"/>
    <property type="evidence" value="ECO:0007669"/>
    <property type="project" value="UniProtKB-KW"/>
</dbReference>
<dbReference type="GO" id="GO:0008270">
    <property type="term" value="F:zinc ion binding"/>
    <property type="evidence" value="ECO:0007669"/>
    <property type="project" value="UniProtKB-UniRule"/>
</dbReference>
<dbReference type="GO" id="GO:0045892">
    <property type="term" value="P:negative regulation of DNA-templated transcription"/>
    <property type="evidence" value="ECO:0007669"/>
    <property type="project" value="UniProtKB-UniRule"/>
</dbReference>
<dbReference type="HAMAP" id="MF_00440">
    <property type="entry name" value="NrdR"/>
    <property type="match status" value="1"/>
</dbReference>
<dbReference type="InterPro" id="IPR005144">
    <property type="entry name" value="ATP-cone_dom"/>
</dbReference>
<dbReference type="InterPro" id="IPR055173">
    <property type="entry name" value="NrdR-like_N"/>
</dbReference>
<dbReference type="InterPro" id="IPR003796">
    <property type="entry name" value="RNR_NrdR-like"/>
</dbReference>
<dbReference type="NCBIfam" id="TIGR00244">
    <property type="entry name" value="transcriptional regulator NrdR"/>
    <property type="match status" value="1"/>
</dbReference>
<dbReference type="PANTHER" id="PTHR30455">
    <property type="entry name" value="TRANSCRIPTIONAL REPRESSOR NRDR"/>
    <property type="match status" value="1"/>
</dbReference>
<dbReference type="PANTHER" id="PTHR30455:SF2">
    <property type="entry name" value="TRANSCRIPTIONAL REPRESSOR NRDR"/>
    <property type="match status" value="1"/>
</dbReference>
<dbReference type="Pfam" id="PF03477">
    <property type="entry name" value="ATP-cone"/>
    <property type="match status" value="1"/>
</dbReference>
<dbReference type="Pfam" id="PF22811">
    <property type="entry name" value="Zn_ribbon_NrdR"/>
    <property type="match status" value="1"/>
</dbReference>
<dbReference type="PROSITE" id="PS51161">
    <property type="entry name" value="ATP_CONE"/>
    <property type="match status" value="1"/>
</dbReference>
<organism>
    <name type="scientific">Chloroflexus aggregans (strain MD-66 / DSM 9485)</name>
    <dbReference type="NCBI Taxonomy" id="326427"/>
    <lineage>
        <taxon>Bacteria</taxon>
        <taxon>Bacillati</taxon>
        <taxon>Chloroflexota</taxon>
        <taxon>Chloroflexia</taxon>
        <taxon>Chloroflexales</taxon>
        <taxon>Chloroflexineae</taxon>
        <taxon>Chloroflexaceae</taxon>
        <taxon>Chloroflexus</taxon>
    </lineage>
</organism>
<gene>
    <name evidence="1" type="primary">nrdR</name>
    <name type="ordered locus">Cagg_0279</name>
</gene>
<protein>
    <recommendedName>
        <fullName evidence="1">Transcriptional repressor NrdR</fullName>
    </recommendedName>
</protein>
<keyword id="KW-0067">ATP-binding</keyword>
<keyword id="KW-0238">DNA-binding</keyword>
<keyword id="KW-0479">Metal-binding</keyword>
<keyword id="KW-0547">Nucleotide-binding</keyword>
<keyword id="KW-0678">Repressor</keyword>
<keyword id="KW-0804">Transcription</keyword>
<keyword id="KW-0805">Transcription regulation</keyword>
<keyword id="KW-0862">Zinc</keyword>
<keyword id="KW-0863">Zinc-finger</keyword>
<comment type="function">
    <text evidence="1">Negatively regulates transcription of bacterial ribonucleotide reductase nrd genes and operons by binding to NrdR-boxes.</text>
</comment>
<comment type="cofactor">
    <cofactor evidence="1">
        <name>Zn(2+)</name>
        <dbReference type="ChEBI" id="CHEBI:29105"/>
    </cofactor>
    <text evidence="1">Binds 1 zinc ion.</text>
</comment>
<comment type="similarity">
    <text evidence="1">Belongs to the NrdR family.</text>
</comment>
<evidence type="ECO:0000255" key="1">
    <source>
        <dbReference type="HAMAP-Rule" id="MF_00440"/>
    </source>
</evidence>
<evidence type="ECO:0000256" key="2">
    <source>
        <dbReference type="SAM" id="MobiDB-lite"/>
    </source>
</evidence>